<reference key="1">
    <citation type="journal article" date="2005" name="Nature">
        <title>The map-based sequence of the rice genome.</title>
        <authorList>
            <consortium name="International rice genome sequencing project (IRGSP)"/>
        </authorList>
    </citation>
    <scope>NUCLEOTIDE SEQUENCE [LARGE SCALE GENOMIC DNA]</scope>
    <source>
        <strain>cv. Nipponbare</strain>
    </source>
</reference>
<reference key="2">
    <citation type="journal article" date="2008" name="Nucleic Acids Res.">
        <title>The rice annotation project database (RAP-DB): 2008 update.</title>
        <authorList>
            <consortium name="The rice annotation project (RAP)"/>
        </authorList>
    </citation>
    <scope>GENOME REANNOTATION</scope>
    <source>
        <strain>cv. Nipponbare</strain>
    </source>
</reference>
<reference key="3">
    <citation type="journal article" date="2013" name="Rice">
        <title>Improvement of the Oryza sativa Nipponbare reference genome using next generation sequence and optical map data.</title>
        <authorList>
            <person name="Kawahara Y."/>
            <person name="de la Bastide M."/>
            <person name="Hamilton J.P."/>
            <person name="Kanamori H."/>
            <person name="McCombie W.R."/>
            <person name="Ouyang S."/>
            <person name="Schwartz D.C."/>
            <person name="Tanaka T."/>
            <person name="Wu J."/>
            <person name="Zhou S."/>
            <person name="Childs K.L."/>
            <person name="Davidson R.M."/>
            <person name="Lin H."/>
            <person name="Quesada-Ocampo L."/>
            <person name="Vaillancourt B."/>
            <person name="Sakai H."/>
            <person name="Lee S.S."/>
            <person name="Kim J."/>
            <person name="Numa H."/>
            <person name="Itoh T."/>
            <person name="Buell C.R."/>
            <person name="Matsumoto T."/>
        </authorList>
    </citation>
    <scope>GENOME REANNOTATION</scope>
    <source>
        <strain>cv. Nipponbare</strain>
    </source>
</reference>
<reference key="4">
    <citation type="journal article" date="2005" name="PLoS Biol.">
        <title>The genomes of Oryza sativa: a history of duplications.</title>
        <authorList>
            <person name="Yu J."/>
            <person name="Wang J."/>
            <person name="Lin W."/>
            <person name="Li S."/>
            <person name="Li H."/>
            <person name="Zhou J."/>
            <person name="Ni P."/>
            <person name="Dong W."/>
            <person name="Hu S."/>
            <person name="Zeng C."/>
            <person name="Zhang J."/>
            <person name="Zhang Y."/>
            <person name="Li R."/>
            <person name="Xu Z."/>
            <person name="Li S."/>
            <person name="Li X."/>
            <person name="Zheng H."/>
            <person name="Cong L."/>
            <person name="Lin L."/>
            <person name="Yin J."/>
            <person name="Geng J."/>
            <person name="Li G."/>
            <person name="Shi J."/>
            <person name="Liu J."/>
            <person name="Lv H."/>
            <person name="Li J."/>
            <person name="Wang J."/>
            <person name="Deng Y."/>
            <person name="Ran L."/>
            <person name="Shi X."/>
            <person name="Wang X."/>
            <person name="Wu Q."/>
            <person name="Li C."/>
            <person name="Ren X."/>
            <person name="Wang J."/>
            <person name="Wang X."/>
            <person name="Li D."/>
            <person name="Liu D."/>
            <person name="Zhang X."/>
            <person name="Ji Z."/>
            <person name="Zhao W."/>
            <person name="Sun Y."/>
            <person name="Zhang Z."/>
            <person name="Bao J."/>
            <person name="Han Y."/>
            <person name="Dong L."/>
            <person name="Ji J."/>
            <person name="Chen P."/>
            <person name="Wu S."/>
            <person name="Liu J."/>
            <person name="Xiao Y."/>
            <person name="Bu D."/>
            <person name="Tan J."/>
            <person name="Yang L."/>
            <person name="Ye C."/>
            <person name="Zhang J."/>
            <person name="Xu J."/>
            <person name="Zhou Y."/>
            <person name="Yu Y."/>
            <person name="Zhang B."/>
            <person name="Zhuang S."/>
            <person name="Wei H."/>
            <person name="Liu B."/>
            <person name="Lei M."/>
            <person name="Yu H."/>
            <person name="Li Y."/>
            <person name="Xu H."/>
            <person name="Wei S."/>
            <person name="He X."/>
            <person name="Fang L."/>
            <person name="Zhang Z."/>
            <person name="Zhang Y."/>
            <person name="Huang X."/>
            <person name="Su Z."/>
            <person name="Tong W."/>
            <person name="Li J."/>
            <person name="Tong Z."/>
            <person name="Li S."/>
            <person name="Ye J."/>
            <person name="Wang L."/>
            <person name="Fang L."/>
            <person name="Lei T."/>
            <person name="Chen C.-S."/>
            <person name="Chen H.-C."/>
            <person name="Xu Z."/>
            <person name="Li H."/>
            <person name="Huang H."/>
            <person name="Zhang F."/>
            <person name="Xu H."/>
            <person name="Li N."/>
            <person name="Zhao C."/>
            <person name="Li S."/>
            <person name="Dong L."/>
            <person name="Huang Y."/>
            <person name="Li L."/>
            <person name="Xi Y."/>
            <person name="Qi Q."/>
            <person name="Li W."/>
            <person name="Zhang B."/>
            <person name="Hu W."/>
            <person name="Zhang Y."/>
            <person name="Tian X."/>
            <person name="Jiao Y."/>
            <person name="Liang X."/>
            <person name="Jin J."/>
            <person name="Gao L."/>
            <person name="Zheng W."/>
            <person name="Hao B."/>
            <person name="Liu S.-M."/>
            <person name="Wang W."/>
            <person name="Yuan L."/>
            <person name="Cao M."/>
            <person name="McDermott J."/>
            <person name="Samudrala R."/>
            <person name="Wang J."/>
            <person name="Wong G.K.-S."/>
            <person name="Yang H."/>
        </authorList>
    </citation>
    <scope>NUCLEOTIDE SEQUENCE [LARGE SCALE GENOMIC DNA]</scope>
    <source>
        <strain>cv. Nipponbare</strain>
    </source>
</reference>
<reference key="5">
    <citation type="journal article" date="2016" name="PLoS Genet.">
        <title>A genetic screen identifies a requirement for cysteine-rich-receptor-like kinases in rice NH1 (OsNPR1)-mediated immunity.</title>
        <authorList>
            <person name="Chern M."/>
            <person name="Xu Q."/>
            <person name="Bart R.S."/>
            <person name="Bai W."/>
            <person name="Ruan D."/>
            <person name="Sze-To W.H."/>
            <person name="Canlas P.E."/>
            <person name="Jain R."/>
            <person name="Chen X."/>
            <person name="Ronald P.C."/>
        </authorList>
    </citation>
    <scope>FUNCTION</scope>
    <scope>INDUCTION BY BENZOTHIADIAZOLE</scope>
</reference>
<comment type="function">
    <text evidence="5">Involved in disease resistance. Required for NPR1/NH1-mediated immunity to the bacterial blight pathogen Xanthomomas oryzae pv. oryzae (Xoo). Required for the benzothiadiazole (BTH)-induced immune response. Probably regulated by the transcription factor TGA2.1.</text>
</comment>
<comment type="subcellular location">
    <subcellularLocation>
        <location evidence="1">Membrane</location>
        <topology evidence="1">Single-pass membrane protein</topology>
    </subcellularLocation>
</comment>
<comment type="induction">
    <text evidence="6">By benzothiadiazole (BTH).</text>
</comment>
<comment type="similarity">
    <text evidence="2">Belongs to the protein kinase superfamily. Ser/Thr protein kinase family. CRK subfamily.</text>
</comment>
<comment type="sequence caution" evidence="8">
    <conflict type="erroneous initiation">
        <sequence resource="EMBL-CDS" id="BAC65055"/>
    </conflict>
    <text>Truncated N-terminus.</text>
</comment>
<comment type="sequence caution" evidence="8">
    <conflict type="erroneous initiation">
        <sequence resource="EMBL-CDS" id="BAD30127"/>
    </conflict>
    <text>Truncated N-terminus.</text>
</comment>
<comment type="sequence caution" evidence="8">
    <conflict type="erroneous initiation">
        <sequence resource="EMBL-CDS" id="EAZ40163"/>
    </conflict>
    <text>Truncated N-terminus.</text>
</comment>
<organism>
    <name type="scientific">Oryza sativa subsp. japonica</name>
    <name type="common">Rice</name>
    <dbReference type="NCBI Taxonomy" id="39947"/>
    <lineage>
        <taxon>Eukaryota</taxon>
        <taxon>Viridiplantae</taxon>
        <taxon>Streptophyta</taxon>
        <taxon>Embryophyta</taxon>
        <taxon>Tracheophyta</taxon>
        <taxon>Spermatophyta</taxon>
        <taxon>Magnoliopsida</taxon>
        <taxon>Liliopsida</taxon>
        <taxon>Poales</taxon>
        <taxon>Poaceae</taxon>
        <taxon>BOP clade</taxon>
        <taxon>Oryzoideae</taxon>
        <taxon>Oryzeae</taxon>
        <taxon>Oryzinae</taxon>
        <taxon>Oryza</taxon>
        <taxon>Oryza sativa</taxon>
    </lineage>
</organism>
<sequence>MSMACYYLAAAAAGLALLLLHAPLTDAQTLVPLCGDSGNYTEHGTYHANIQYLATSLPSYASSSPSLFASGSSGTVPDAIYALALCRGDTNSSSCATCVAAAIQSAQELCPLVKTVIVYDDTCILRFANDAFPISPTSNSQGMVVAWKAQNVSAAVAPAFEAAVVRLINTTADYAATDSVRRFGTGEEAFDETTFPKIYSLAQCTPDMAATACRSCLEDIVGRMVSGNLIGRMGGRVLGVRCNLWFEVYPFFSGRSLLQLPGPSPSPAPPVTAAGERSKNKRSAILAISMPTIALVLATIAAWFCSTSWRRRRLARKTLRPKSSEDEMQSFASLVLDLQTLRTATDNFSEHKRLGEGGFGVVYKGDLPEGQEIAVKRLAQTSRQGIEELKTELLLVAKLNHNNLVRLIGVCLEENEKILAYEYMPNRSLDTILFDAERIKELDWGQRFKIINGIARGLQYLHEDSQLKIVHRDLKASNVLLDSAYNPKISDFGLAKIFERDQSQVITHRIAGTYGYMSPEYAMRGQYSMKLDVYSFGVLVLEIITGRRNFGSYGSDHVVDLIYVTWEHWTSDKAIELIDPSLGNHYPVDKVLKCIHIGLLCVQPKPADRPLMSAVNAMLSSTGTVRLPCLSRPSFWVQEIGATAS</sequence>
<accession>Q0D5R2</accession>
<accession>A3BKS4</accession>
<accession>Q84S59</accession>
<gene>
    <name evidence="7" type="primary">CRK10</name>
    <name evidence="11" type="ordered locus">Os07g0541500</name>
    <name evidence="8" type="ordered locus">LOC_Os07g35700</name>
    <name evidence="10" type="ORF">OJ1008_E09.116</name>
    <name evidence="12" type="ORF">OsJ_24608</name>
    <name evidence="9" type="ORF">P0458H05.133</name>
</gene>
<keyword id="KW-0067">ATP-binding</keyword>
<keyword id="KW-1015">Disulfide bond</keyword>
<keyword id="KW-0325">Glycoprotein</keyword>
<keyword id="KW-0418">Kinase</keyword>
<keyword id="KW-0472">Membrane</keyword>
<keyword id="KW-0547">Nucleotide-binding</keyword>
<keyword id="KW-0611">Plant defense</keyword>
<keyword id="KW-1185">Reference proteome</keyword>
<keyword id="KW-0677">Repeat</keyword>
<keyword id="KW-0723">Serine/threonine-protein kinase</keyword>
<keyword id="KW-0732">Signal</keyword>
<keyword id="KW-0808">Transferase</keyword>
<keyword id="KW-0812">Transmembrane</keyword>
<keyword id="KW-1133">Transmembrane helix</keyword>
<proteinExistence type="evidence at transcript level"/>
<dbReference type="EC" id="2.7.11.-" evidence="8"/>
<dbReference type="EMBL" id="AP003736">
    <property type="protein sequence ID" value="BAD30127.1"/>
    <property type="status" value="ALT_INIT"/>
    <property type="molecule type" value="Genomic_DNA"/>
</dbReference>
<dbReference type="EMBL" id="AP005786">
    <property type="protein sequence ID" value="BAC65055.1"/>
    <property type="status" value="ALT_INIT"/>
    <property type="molecule type" value="Genomic_DNA"/>
</dbReference>
<dbReference type="EMBL" id="AP008213">
    <property type="protein sequence ID" value="BAF21811.1"/>
    <property type="molecule type" value="Genomic_DNA"/>
</dbReference>
<dbReference type="EMBL" id="AP014963">
    <property type="protein sequence ID" value="BAT01969.1"/>
    <property type="molecule type" value="Genomic_DNA"/>
</dbReference>
<dbReference type="EMBL" id="CM000144">
    <property type="protein sequence ID" value="EAZ40163.1"/>
    <property type="status" value="ALT_INIT"/>
    <property type="molecule type" value="Genomic_DNA"/>
</dbReference>
<dbReference type="RefSeq" id="XP_015645020.1">
    <property type="nucleotide sequence ID" value="XM_015789534.1"/>
</dbReference>
<dbReference type="SMR" id="Q0D5R2"/>
<dbReference type="FunCoup" id="Q0D5R2">
    <property type="interactions" value="20"/>
</dbReference>
<dbReference type="STRING" id="39947.Q0D5R2"/>
<dbReference type="GlyCosmos" id="Q0D5R2">
    <property type="glycosylation" value="4 sites, No reported glycans"/>
</dbReference>
<dbReference type="PaxDb" id="39947-Q0D5R2"/>
<dbReference type="EnsemblPlants" id="Os07t0541500-01">
    <property type="protein sequence ID" value="Os07t0541500-01"/>
    <property type="gene ID" value="Os07g0541500"/>
</dbReference>
<dbReference type="Gramene" id="Os07t0541500-01">
    <property type="protein sequence ID" value="Os07t0541500-01"/>
    <property type="gene ID" value="Os07g0541500"/>
</dbReference>
<dbReference type="KEGG" id="dosa:Os07g0541500"/>
<dbReference type="eggNOG" id="ENOG502QWDY">
    <property type="taxonomic scope" value="Eukaryota"/>
</dbReference>
<dbReference type="HOGENOM" id="CLU_000288_35_7_1"/>
<dbReference type="InParanoid" id="Q0D5R2"/>
<dbReference type="OMA" id="MIAQMTP"/>
<dbReference type="OrthoDB" id="672971at2759"/>
<dbReference type="Proteomes" id="UP000000763">
    <property type="component" value="Chromosome 7"/>
</dbReference>
<dbReference type="Proteomes" id="UP000007752">
    <property type="component" value="Chromosome 7"/>
</dbReference>
<dbReference type="Proteomes" id="UP000059680">
    <property type="component" value="Chromosome 7"/>
</dbReference>
<dbReference type="GO" id="GO:0005886">
    <property type="term" value="C:plasma membrane"/>
    <property type="evidence" value="ECO:0000318"/>
    <property type="project" value="GO_Central"/>
</dbReference>
<dbReference type="GO" id="GO:0005524">
    <property type="term" value="F:ATP binding"/>
    <property type="evidence" value="ECO:0007669"/>
    <property type="project" value="UniProtKB-KW"/>
</dbReference>
<dbReference type="GO" id="GO:0004674">
    <property type="term" value="F:protein serine/threonine kinase activity"/>
    <property type="evidence" value="ECO:0000318"/>
    <property type="project" value="GO_Central"/>
</dbReference>
<dbReference type="GO" id="GO:0042742">
    <property type="term" value="P:defense response to bacterium"/>
    <property type="evidence" value="ECO:0000315"/>
    <property type="project" value="UniProtKB"/>
</dbReference>
<dbReference type="GO" id="GO:0006955">
    <property type="term" value="P:immune response"/>
    <property type="evidence" value="ECO:0000318"/>
    <property type="project" value="GO_Central"/>
</dbReference>
<dbReference type="GO" id="GO:0007165">
    <property type="term" value="P:signal transduction"/>
    <property type="evidence" value="ECO:0000318"/>
    <property type="project" value="GO_Central"/>
</dbReference>
<dbReference type="CDD" id="cd23509">
    <property type="entry name" value="Gnk2-like"/>
    <property type="match status" value="2"/>
</dbReference>
<dbReference type="CDD" id="cd14066">
    <property type="entry name" value="STKc_IRAK"/>
    <property type="match status" value="1"/>
</dbReference>
<dbReference type="FunFam" id="3.30.200.20:FF:000142">
    <property type="entry name" value="Cysteine-rich receptor-like protein kinase 10"/>
    <property type="match status" value="1"/>
</dbReference>
<dbReference type="FunFam" id="1.10.510.10:FF:000129">
    <property type="entry name" value="cysteine-rich receptor-like protein kinase 10"/>
    <property type="match status" value="1"/>
</dbReference>
<dbReference type="FunFam" id="3.30.430.20:FF:000004">
    <property type="entry name" value="Receptor-like serine-threonine protein kinase"/>
    <property type="match status" value="1"/>
</dbReference>
<dbReference type="FunFam" id="3.30.430.20:FF:000006">
    <property type="entry name" value="Receptor-like serine-threonine protein kinase"/>
    <property type="match status" value="1"/>
</dbReference>
<dbReference type="Gene3D" id="3.30.430.20">
    <property type="entry name" value="Gnk2 domain, C-X8-C-X2-C motif"/>
    <property type="match status" value="2"/>
</dbReference>
<dbReference type="Gene3D" id="3.30.200.20">
    <property type="entry name" value="Phosphorylase Kinase, domain 1"/>
    <property type="match status" value="1"/>
</dbReference>
<dbReference type="Gene3D" id="1.10.510.10">
    <property type="entry name" value="Transferase(Phosphotransferase) domain 1"/>
    <property type="match status" value="1"/>
</dbReference>
<dbReference type="InterPro" id="IPR002902">
    <property type="entry name" value="GNK2"/>
</dbReference>
<dbReference type="InterPro" id="IPR038408">
    <property type="entry name" value="GNK2_sf"/>
</dbReference>
<dbReference type="InterPro" id="IPR011009">
    <property type="entry name" value="Kinase-like_dom_sf"/>
</dbReference>
<dbReference type="InterPro" id="IPR000719">
    <property type="entry name" value="Prot_kinase_dom"/>
</dbReference>
<dbReference type="InterPro" id="IPR017441">
    <property type="entry name" value="Protein_kinase_ATP_BS"/>
</dbReference>
<dbReference type="InterPro" id="IPR008271">
    <property type="entry name" value="Ser/Thr_kinase_AS"/>
</dbReference>
<dbReference type="PANTHER" id="PTHR27002:SF423">
    <property type="entry name" value="CYSTEINE-RICH RECEPTOR-LIKE PROTEIN KINASE 10"/>
    <property type="match status" value="1"/>
</dbReference>
<dbReference type="PANTHER" id="PTHR27002">
    <property type="entry name" value="RECEPTOR-LIKE SERINE/THREONINE-PROTEIN KINASE SD1-8"/>
    <property type="match status" value="1"/>
</dbReference>
<dbReference type="Pfam" id="PF00069">
    <property type="entry name" value="Pkinase"/>
    <property type="match status" value="1"/>
</dbReference>
<dbReference type="Pfam" id="PF01657">
    <property type="entry name" value="Stress-antifung"/>
    <property type="match status" value="2"/>
</dbReference>
<dbReference type="SMART" id="SM00220">
    <property type="entry name" value="S_TKc"/>
    <property type="match status" value="1"/>
</dbReference>
<dbReference type="SUPFAM" id="SSF56112">
    <property type="entry name" value="Protein kinase-like (PK-like)"/>
    <property type="match status" value="1"/>
</dbReference>
<dbReference type="PROSITE" id="PS51473">
    <property type="entry name" value="GNK2"/>
    <property type="match status" value="2"/>
</dbReference>
<dbReference type="PROSITE" id="PS00107">
    <property type="entry name" value="PROTEIN_KINASE_ATP"/>
    <property type="match status" value="1"/>
</dbReference>
<dbReference type="PROSITE" id="PS50011">
    <property type="entry name" value="PROTEIN_KINASE_DOM"/>
    <property type="match status" value="1"/>
</dbReference>
<dbReference type="PROSITE" id="PS00108">
    <property type="entry name" value="PROTEIN_KINASE_ST"/>
    <property type="match status" value="1"/>
</dbReference>
<name>CRK10_ORYSJ</name>
<evidence type="ECO:0000255" key="1"/>
<evidence type="ECO:0000255" key="2">
    <source>
        <dbReference type="PROSITE-ProRule" id="PRU00159"/>
    </source>
</evidence>
<evidence type="ECO:0000255" key="3">
    <source>
        <dbReference type="PROSITE-ProRule" id="PRU00498"/>
    </source>
</evidence>
<evidence type="ECO:0000255" key="4">
    <source>
        <dbReference type="PROSITE-ProRule" id="PRU00806"/>
    </source>
</evidence>
<evidence type="ECO:0000269" key="5">
    <source>
    </source>
</evidence>
<evidence type="ECO:0000269" key="6">
    <source>
    </source>
</evidence>
<evidence type="ECO:0000303" key="7">
    <source>
    </source>
</evidence>
<evidence type="ECO:0000305" key="8"/>
<evidence type="ECO:0000312" key="9">
    <source>
        <dbReference type="EMBL" id="BAC65055.1"/>
    </source>
</evidence>
<evidence type="ECO:0000312" key="10">
    <source>
        <dbReference type="EMBL" id="BAD30127.1"/>
    </source>
</evidence>
<evidence type="ECO:0000312" key="11">
    <source>
        <dbReference type="EMBL" id="BAF21811.1"/>
    </source>
</evidence>
<evidence type="ECO:0000312" key="12">
    <source>
        <dbReference type="EMBL" id="EAZ40163.1"/>
    </source>
</evidence>
<protein>
    <recommendedName>
        <fullName evidence="8">Cysteine-rich receptor-like protein kinase 10</fullName>
        <shortName evidence="8">Cysteine-rich RLK10</shortName>
        <ecNumber evidence="8">2.7.11.-</ecNumber>
    </recommendedName>
</protein>
<feature type="signal peptide" evidence="1">
    <location>
        <begin position="1"/>
        <end position="27"/>
    </location>
</feature>
<feature type="chain" id="PRO_5007318542" description="Cysteine-rich receptor-like protein kinase 10" evidence="1">
    <location>
        <begin position="28"/>
        <end position="645"/>
    </location>
</feature>
<feature type="topological domain" description="Extracellular" evidence="8">
    <location>
        <begin position="28"/>
        <end position="283"/>
    </location>
</feature>
<feature type="transmembrane region" description="Helical" evidence="1">
    <location>
        <begin position="284"/>
        <end position="304"/>
    </location>
</feature>
<feature type="topological domain" description="Cytoplasmic" evidence="8">
    <location>
        <begin position="305"/>
        <end position="645"/>
    </location>
</feature>
<feature type="domain" description="Gnk2-homologous 1" evidence="4">
    <location>
        <begin position="28"/>
        <end position="132"/>
    </location>
</feature>
<feature type="domain" description="Gnk2-homologous 2" evidence="4">
    <location>
        <begin position="140"/>
        <end position="251"/>
    </location>
</feature>
<feature type="domain" description="Protein kinase" evidence="2">
    <location>
        <begin position="348"/>
        <end position="619"/>
    </location>
</feature>
<feature type="active site" description="Proton acceptor" evidence="2">
    <location>
        <position position="473"/>
    </location>
</feature>
<feature type="binding site" evidence="2">
    <location>
        <begin position="354"/>
        <end position="362"/>
    </location>
    <ligand>
        <name>ATP</name>
        <dbReference type="ChEBI" id="CHEBI:30616"/>
    </ligand>
</feature>
<feature type="binding site" evidence="2">
    <location>
        <position position="376"/>
    </location>
    <ligand>
        <name>ATP</name>
        <dbReference type="ChEBI" id="CHEBI:30616"/>
    </ligand>
</feature>
<feature type="glycosylation site" description="N-linked (GlcNAc...) asparagine" evidence="3">
    <location>
        <position position="39"/>
    </location>
</feature>
<feature type="glycosylation site" description="N-linked (GlcNAc...) asparagine" evidence="3">
    <location>
        <position position="91"/>
    </location>
</feature>
<feature type="glycosylation site" description="N-linked (GlcNAc...) asparagine" evidence="3">
    <location>
        <position position="151"/>
    </location>
</feature>
<feature type="glycosylation site" description="N-linked (GlcNAc...) asparagine" evidence="3">
    <location>
        <position position="169"/>
    </location>
</feature>
<feature type="disulfide bond" evidence="4">
    <location>
        <begin position="86"/>
        <end position="95"/>
    </location>
</feature>
<feature type="disulfide bond" evidence="4">
    <location>
        <begin position="98"/>
        <end position="123"/>
    </location>
</feature>
<feature type="disulfide bond" evidence="4">
    <location>
        <begin position="204"/>
        <end position="213"/>
    </location>
</feature>
<feature type="disulfide bond" evidence="4">
    <location>
        <begin position="216"/>
        <end position="242"/>
    </location>
</feature>
<feature type="sequence conflict" description="In Ref. 4; EAZ40163." evidence="8" ref="4">
    <original>K</original>
    <variation>Q</variation>
    <location>
        <position position="352"/>
    </location>
</feature>